<gene>
    <name evidence="1" type="primary">minE</name>
    <name type="ordered locus">Dgeo_0377</name>
</gene>
<sequence length="85" mass="9684">MFSWLKGRRSKDTLKDRLELVLAYDRAQIPPGKVDALRNDLLEVVKRYFPAGSSNVEVEQRGDQVVLMASIALDEGIENPGRRER</sequence>
<evidence type="ECO:0000255" key="1">
    <source>
        <dbReference type="HAMAP-Rule" id="MF_00262"/>
    </source>
</evidence>
<name>MINE_DEIGD</name>
<organism>
    <name type="scientific">Deinococcus geothermalis (strain DSM 11300 / CIP 105573 / AG-3a)</name>
    <dbReference type="NCBI Taxonomy" id="319795"/>
    <lineage>
        <taxon>Bacteria</taxon>
        <taxon>Thermotogati</taxon>
        <taxon>Deinococcota</taxon>
        <taxon>Deinococci</taxon>
        <taxon>Deinococcales</taxon>
        <taxon>Deinococcaceae</taxon>
        <taxon>Deinococcus</taxon>
    </lineage>
</organism>
<proteinExistence type="inferred from homology"/>
<keyword id="KW-0131">Cell cycle</keyword>
<keyword id="KW-0132">Cell division</keyword>
<reference key="1">
    <citation type="submission" date="2006-04" db="EMBL/GenBank/DDBJ databases">
        <title>Complete sequence of chromosome of Deinococcus geothermalis DSM 11300.</title>
        <authorList>
            <person name="Copeland A."/>
            <person name="Lucas S."/>
            <person name="Lapidus A."/>
            <person name="Barry K."/>
            <person name="Detter J.C."/>
            <person name="Glavina del Rio T."/>
            <person name="Hammon N."/>
            <person name="Israni S."/>
            <person name="Dalin E."/>
            <person name="Tice H."/>
            <person name="Pitluck S."/>
            <person name="Brettin T."/>
            <person name="Bruce D."/>
            <person name="Han C."/>
            <person name="Tapia R."/>
            <person name="Saunders E."/>
            <person name="Gilna P."/>
            <person name="Schmutz J."/>
            <person name="Larimer F."/>
            <person name="Land M."/>
            <person name="Hauser L."/>
            <person name="Kyrpides N."/>
            <person name="Kim E."/>
            <person name="Daly M.J."/>
            <person name="Fredrickson J.K."/>
            <person name="Makarova K.S."/>
            <person name="Gaidamakova E.K."/>
            <person name="Zhai M."/>
            <person name="Richardson P."/>
        </authorList>
    </citation>
    <scope>NUCLEOTIDE SEQUENCE [LARGE SCALE GENOMIC DNA]</scope>
    <source>
        <strain>DSM 11300 / CIP 105573 / AG-3a</strain>
    </source>
</reference>
<protein>
    <recommendedName>
        <fullName evidence="1">Cell division topological specificity factor</fullName>
    </recommendedName>
</protein>
<accession>Q1J1F4</accession>
<comment type="function">
    <text evidence="1">Prevents the cell division inhibition by proteins MinC and MinD at internal division sites while permitting inhibition at polar sites. This ensures cell division at the proper site by restricting the formation of a division septum at the midpoint of the long axis of the cell.</text>
</comment>
<comment type="similarity">
    <text evidence="1">Belongs to the MinE family.</text>
</comment>
<feature type="chain" id="PRO_0000298107" description="Cell division topological specificity factor">
    <location>
        <begin position="1"/>
        <end position="85"/>
    </location>
</feature>
<dbReference type="EMBL" id="CP000359">
    <property type="protein sequence ID" value="ABF44680.1"/>
    <property type="molecule type" value="Genomic_DNA"/>
</dbReference>
<dbReference type="RefSeq" id="WP_011529524.1">
    <property type="nucleotide sequence ID" value="NC_008025.1"/>
</dbReference>
<dbReference type="SMR" id="Q1J1F4"/>
<dbReference type="STRING" id="319795.Dgeo_0377"/>
<dbReference type="KEGG" id="dge:Dgeo_0377"/>
<dbReference type="eggNOG" id="COG0851">
    <property type="taxonomic scope" value="Bacteria"/>
</dbReference>
<dbReference type="HOGENOM" id="CLU_137929_1_2_0"/>
<dbReference type="Proteomes" id="UP000002431">
    <property type="component" value="Chromosome"/>
</dbReference>
<dbReference type="GO" id="GO:0051301">
    <property type="term" value="P:cell division"/>
    <property type="evidence" value="ECO:0007669"/>
    <property type="project" value="UniProtKB-KW"/>
</dbReference>
<dbReference type="GO" id="GO:0032955">
    <property type="term" value="P:regulation of division septum assembly"/>
    <property type="evidence" value="ECO:0007669"/>
    <property type="project" value="InterPro"/>
</dbReference>
<dbReference type="Gene3D" id="3.30.1070.10">
    <property type="entry name" value="Cell division topological specificity factor MinE"/>
    <property type="match status" value="1"/>
</dbReference>
<dbReference type="HAMAP" id="MF_00262">
    <property type="entry name" value="MinE"/>
    <property type="match status" value="1"/>
</dbReference>
<dbReference type="InterPro" id="IPR005527">
    <property type="entry name" value="MinE"/>
</dbReference>
<dbReference type="InterPro" id="IPR036707">
    <property type="entry name" value="MinE_sf"/>
</dbReference>
<dbReference type="NCBIfam" id="TIGR01215">
    <property type="entry name" value="minE"/>
    <property type="match status" value="1"/>
</dbReference>
<dbReference type="Pfam" id="PF03776">
    <property type="entry name" value="MinE"/>
    <property type="match status" value="1"/>
</dbReference>
<dbReference type="SUPFAM" id="SSF55229">
    <property type="entry name" value="Cell division protein MinE topological specificity domain"/>
    <property type="match status" value="1"/>
</dbReference>